<proteinExistence type="evidence at transcript level"/>
<protein>
    <recommendedName>
        <fullName evidence="6">Complement C2</fullName>
    </recommendedName>
    <alternativeName>
        <fullName>C3/C5 convertase</fullName>
    </alternativeName>
    <component>
        <recommendedName>
            <fullName>Complement C2a</fullName>
        </recommendedName>
    </component>
    <component>
        <recommendedName>
            <fullName>Serine protease complement C2b</fullName>
            <ecNumber evidence="1">3.4.21.43</ecNumber>
        </recommendedName>
    </component>
</protein>
<keyword id="KW-0180">Complement pathway</keyword>
<keyword id="KW-1015">Disulfide bond</keyword>
<keyword id="KW-0325">Glycoprotein</keyword>
<keyword id="KW-0378">Hydrolase</keyword>
<keyword id="KW-0391">Immunity</keyword>
<keyword id="KW-0399">Innate immunity</keyword>
<keyword id="KW-0460">Magnesium</keyword>
<keyword id="KW-0464">Manganese</keyword>
<keyword id="KW-0479">Metal-binding</keyword>
<keyword id="KW-0645">Protease</keyword>
<keyword id="KW-1185">Reference proteome</keyword>
<keyword id="KW-0677">Repeat</keyword>
<keyword id="KW-0964">Secreted</keyword>
<keyword id="KW-0720">Serine protease</keyword>
<keyword id="KW-0732">Signal</keyword>
<keyword id="KW-0768">Sushi</keyword>
<accession>Q3SYW2</accession>
<reference key="1">
    <citation type="submission" date="2005-08" db="EMBL/GenBank/DDBJ databases">
        <authorList>
            <consortium name="NIH - Mammalian Gene Collection (MGC) project"/>
        </authorList>
    </citation>
    <scope>NUCLEOTIDE SEQUENCE [LARGE SCALE MRNA]</scope>
    <source>
        <strain>Crossbred X Angus</strain>
        <tissue>Ileum</tissue>
    </source>
</reference>
<name>CO2_BOVIN</name>
<feature type="signal peptide" evidence="1">
    <location>
        <begin position="1"/>
        <end position="20"/>
    </location>
</feature>
<feature type="chain" id="PRO_0000236266" description="Complement C2">
    <location>
        <begin position="21"/>
        <end position="750"/>
    </location>
</feature>
<feature type="chain" id="PRO_0000236267" description="Complement C2a" evidence="1">
    <location>
        <begin position="21"/>
        <end position="244"/>
    </location>
</feature>
<feature type="chain" id="PRO_0000236268" description="Serine protease complement C2b" evidence="1">
    <location>
        <begin position="245"/>
        <end position="750"/>
    </location>
</feature>
<feature type="domain" description="Sushi 1" evidence="5">
    <location>
        <begin position="22"/>
        <end position="86"/>
    </location>
</feature>
<feature type="domain" description="Sushi 2" evidence="5">
    <location>
        <begin position="87"/>
        <end position="146"/>
    </location>
</feature>
<feature type="domain" description="Sushi 3" evidence="5">
    <location>
        <begin position="149"/>
        <end position="206"/>
    </location>
</feature>
<feature type="domain" description="VWFA" evidence="3">
    <location>
        <begin position="255"/>
        <end position="453"/>
    </location>
</feature>
<feature type="domain" description="Peptidase S1" evidence="4">
    <location>
        <begin position="465"/>
        <end position="742"/>
    </location>
</feature>
<feature type="short sequence motif" description="MIDAS-like motif" evidence="1">
    <location>
        <begin position="261"/>
        <end position="265"/>
    </location>
</feature>
<feature type="active site" description="Charge relay system" evidence="1">
    <location>
        <position position="508"/>
    </location>
</feature>
<feature type="active site" description="Charge relay system" evidence="1">
    <location>
        <position position="562"/>
    </location>
</feature>
<feature type="active site" description="Charge relay system" evidence="1">
    <location>
        <position position="680"/>
    </location>
</feature>
<feature type="binding site" evidence="1">
    <location>
        <position position="263"/>
    </location>
    <ligand>
        <name>Mg(2+)</name>
        <dbReference type="ChEBI" id="CHEBI:18420"/>
    </ligand>
</feature>
<feature type="binding site" evidence="1">
    <location>
        <position position="265"/>
    </location>
    <ligand>
        <name>Mg(2+)</name>
        <dbReference type="ChEBI" id="CHEBI:18420"/>
    </ligand>
</feature>
<feature type="binding site" evidence="1">
    <location>
        <position position="338"/>
    </location>
    <ligand>
        <name>Mg(2+)</name>
        <dbReference type="ChEBI" id="CHEBI:18420"/>
    </ligand>
</feature>
<feature type="site" description="Cleavage; by C1S, MASP2 and GZMK" evidence="1">
    <location>
        <begin position="244"/>
        <end position="245"/>
    </location>
</feature>
<feature type="glycosylation site" description="N-linked (GlcNAc...) asparagine" evidence="2">
    <location>
        <position position="29"/>
    </location>
</feature>
<feature type="glycosylation site" description="N-linked (GlcNAc...) asparagine" evidence="2">
    <location>
        <position position="112"/>
    </location>
</feature>
<feature type="glycosylation site" description="N-linked (GlcNAc...) asparagine" evidence="2">
    <location>
        <position position="334"/>
    </location>
</feature>
<feature type="glycosylation site" description="N-linked (GlcNAc...) asparagine" evidence="2">
    <location>
        <position position="468"/>
    </location>
</feature>
<feature type="glycosylation site" description="N-linked (GlcNAc...) asparagine" evidence="2">
    <location>
        <position position="472"/>
    </location>
</feature>
<feature type="glycosylation site" description="N-linked (GlcNAc...) asparagine" evidence="2">
    <location>
        <position position="652"/>
    </location>
</feature>
<feature type="disulfide bond" evidence="1">
    <location>
        <begin position="24"/>
        <end position="65"/>
    </location>
</feature>
<feature type="disulfide bond" evidence="1">
    <location>
        <begin position="51"/>
        <end position="84"/>
    </location>
</feature>
<feature type="disulfide bond" evidence="1">
    <location>
        <begin position="89"/>
        <end position="131"/>
    </location>
</feature>
<feature type="disulfide bond" evidence="1">
    <location>
        <begin position="117"/>
        <end position="144"/>
    </location>
</feature>
<feature type="disulfide bond" evidence="1">
    <location>
        <begin position="151"/>
        <end position="191"/>
    </location>
</feature>
<feature type="disulfide bond" evidence="1">
    <location>
        <begin position="177"/>
        <end position="204"/>
    </location>
</feature>
<feature type="disulfide bond" evidence="1">
    <location>
        <begin position="464"/>
        <end position="582"/>
    </location>
</feature>
<feature type="disulfide bond" evidence="1">
    <location>
        <begin position="493"/>
        <end position="509"/>
    </location>
</feature>
<feature type="disulfide bond" evidence="1">
    <location>
        <begin position="585"/>
        <end position="601"/>
    </location>
</feature>
<feature type="disulfide bond" evidence="1">
    <location>
        <begin position="639"/>
        <end position="666"/>
    </location>
</feature>
<feature type="disulfide bond" evidence="1">
    <location>
        <begin position="676"/>
        <end position="706"/>
    </location>
</feature>
<dbReference type="EC" id="3.4.21.43" evidence="1"/>
<dbReference type="EMBL" id="BC103357">
    <property type="protein sequence ID" value="AAI03358.1"/>
    <property type="molecule type" value="mRNA"/>
</dbReference>
<dbReference type="RefSeq" id="NP_001029664.1">
    <property type="nucleotide sequence ID" value="NM_001034492.1"/>
</dbReference>
<dbReference type="SMR" id="Q3SYW2"/>
<dbReference type="FunCoup" id="Q3SYW2">
    <property type="interactions" value="129"/>
</dbReference>
<dbReference type="STRING" id="9913.ENSBTAP00000042824"/>
<dbReference type="MEROPS" id="S01.194"/>
<dbReference type="GlyCosmos" id="Q3SYW2">
    <property type="glycosylation" value="6 sites, No reported glycans"/>
</dbReference>
<dbReference type="GlyGen" id="Q3SYW2">
    <property type="glycosylation" value="6 sites"/>
</dbReference>
<dbReference type="PaxDb" id="9913-ENSBTAP00000042824"/>
<dbReference type="GeneID" id="515440"/>
<dbReference type="KEGG" id="bta:515440"/>
<dbReference type="CTD" id="717"/>
<dbReference type="VEuPathDB" id="HostDB:ENSBTAG00000007450"/>
<dbReference type="eggNOG" id="KOG3627">
    <property type="taxonomic scope" value="Eukaryota"/>
</dbReference>
<dbReference type="InParanoid" id="Q3SYW2"/>
<dbReference type="OrthoDB" id="6127264at2759"/>
<dbReference type="Reactome" id="R-BTA-166663">
    <property type="pathway name" value="Initial triggering of complement"/>
</dbReference>
<dbReference type="Reactome" id="R-BTA-174577">
    <property type="pathway name" value="Activation of C3 and C5"/>
</dbReference>
<dbReference type="Reactome" id="R-BTA-977606">
    <property type="pathway name" value="Regulation of Complement cascade"/>
</dbReference>
<dbReference type="Proteomes" id="UP000009136">
    <property type="component" value="Chromosome 23"/>
</dbReference>
<dbReference type="Bgee" id="ENSBTAG00000007450">
    <property type="expression patterns" value="Expressed in liver and 102 other cell types or tissues"/>
</dbReference>
<dbReference type="GO" id="GO:0005576">
    <property type="term" value="C:extracellular region"/>
    <property type="evidence" value="ECO:0007669"/>
    <property type="project" value="UniProtKB-SubCell"/>
</dbReference>
<dbReference type="GO" id="GO:0046872">
    <property type="term" value="F:metal ion binding"/>
    <property type="evidence" value="ECO:0007669"/>
    <property type="project" value="UniProtKB-KW"/>
</dbReference>
<dbReference type="GO" id="GO:0004252">
    <property type="term" value="F:serine-type endopeptidase activity"/>
    <property type="evidence" value="ECO:0007669"/>
    <property type="project" value="UniProtKB-EC"/>
</dbReference>
<dbReference type="GO" id="GO:0006956">
    <property type="term" value="P:complement activation"/>
    <property type="evidence" value="ECO:0000318"/>
    <property type="project" value="GO_Central"/>
</dbReference>
<dbReference type="GO" id="GO:0006958">
    <property type="term" value="P:complement activation, classical pathway"/>
    <property type="evidence" value="ECO:0007669"/>
    <property type="project" value="UniProtKB-KW"/>
</dbReference>
<dbReference type="GO" id="GO:0045087">
    <property type="term" value="P:innate immune response"/>
    <property type="evidence" value="ECO:0007669"/>
    <property type="project" value="UniProtKB-KW"/>
</dbReference>
<dbReference type="GO" id="GO:0006508">
    <property type="term" value="P:proteolysis"/>
    <property type="evidence" value="ECO:0007669"/>
    <property type="project" value="UniProtKB-KW"/>
</dbReference>
<dbReference type="GO" id="GO:0009617">
    <property type="term" value="P:response to bacterium"/>
    <property type="evidence" value="ECO:0000318"/>
    <property type="project" value="GO_Central"/>
</dbReference>
<dbReference type="CDD" id="cd00033">
    <property type="entry name" value="CCP"/>
    <property type="match status" value="3"/>
</dbReference>
<dbReference type="CDD" id="cd00190">
    <property type="entry name" value="Tryp_SPc"/>
    <property type="match status" value="1"/>
</dbReference>
<dbReference type="FunFam" id="2.40.10.10:FF:000051">
    <property type="entry name" value="complement C2 isoform X1"/>
    <property type="match status" value="1"/>
</dbReference>
<dbReference type="FunFam" id="2.10.70.10:FF:000052">
    <property type="entry name" value="Complement factor B"/>
    <property type="match status" value="1"/>
</dbReference>
<dbReference type="FunFam" id="2.10.70.10:FF:000019">
    <property type="entry name" value="Complement factor b,-like"/>
    <property type="match status" value="2"/>
</dbReference>
<dbReference type="FunFam" id="2.40.10.10:FF:000046">
    <property type="entry name" value="Complement factor b,-like"/>
    <property type="match status" value="1"/>
</dbReference>
<dbReference type="Gene3D" id="2.10.70.10">
    <property type="entry name" value="Complement Module, domain 1"/>
    <property type="match status" value="3"/>
</dbReference>
<dbReference type="Gene3D" id="2.40.10.10">
    <property type="entry name" value="Trypsin-like serine proteases"/>
    <property type="match status" value="2"/>
</dbReference>
<dbReference type="Gene3D" id="3.40.50.410">
    <property type="entry name" value="von Willebrand factor, type A domain"/>
    <property type="match status" value="1"/>
</dbReference>
<dbReference type="InterPro" id="IPR011360">
    <property type="entry name" value="Compl_C2_B"/>
</dbReference>
<dbReference type="InterPro" id="IPR009003">
    <property type="entry name" value="Peptidase_S1_PA"/>
</dbReference>
<dbReference type="InterPro" id="IPR043504">
    <property type="entry name" value="Peptidase_S1_PA_chymotrypsin"/>
</dbReference>
<dbReference type="InterPro" id="IPR001314">
    <property type="entry name" value="Peptidase_S1A"/>
</dbReference>
<dbReference type="InterPro" id="IPR035976">
    <property type="entry name" value="Sushi/SCR/CCP_sf"/>
</dbReference>
<dbReference type="InterPro" id="IPR000436">
    <property type="entry name" value="Sushi_SCR_CCP_dom"/>
</dbReference>
<dbReference type="InterPro" id="IPR001254">
    <property type="entry name" value="Trypsin_dom"/>
</dbReference>
<dbReference type="InterPro" id="IPR018114">
    <property type="entry name" value="TRYPSIN_HIS"/>
</dbReference>
<dbReference type="InterPro" id="IPR033116">
    <property type="entry name" value="TRYPSIN_SER"/>
</dbReference>
<dbReference type="InterPro" id="IPR002035">
    <property type="entry name" value="VWF_A"/>
</dbReference>
<dbReference type="InterPro" id="IPR036465">
    <property type="entry name" value="vWFA_dom_sf"/>
</dbReference>
<dbReference type="PANTHER" id="PTHR46393:SF2">
    <property type="entry name" value="COMPLEMENT C2"/>
    <property type="match status" value="1"/>
</dbReference>
<dbReference type="PANTHER" id="PTHR46393">
    <property type="entry name" value="SUSHI DOMAIN-CONTAINING PROTEIN"/>
    <property type="match status" value="1"/>
</dbReference>
<dbReference type="Pfam" id="PF00084">
    <property type="entry name" value="Sushi"/>
    <property type="match status" value="3"/>
</dbReference>
<dbReference type="Pfam" id="PF00089">
    <property type="entry name" value="Trypsin"/>
    <property type="match status" value="1"/>
</dbReference>
<dbReference type="Pfam" id="PF00092">
    <property type="entry name" value="VWA"/>
    <property type="match status" value="1"/>
</dbReference>
<dbReference type="PIRSF" id="PIRSF001154">
    <property type="entry name" value="Compl_C2_B"/>
    <property type="match status" value="1"/>
</dbReference>
<dbReference type="PRINTS" id="PR00722">
    <property type="entry name" value="CHYMOTRYPSIN"/>
</dbReference>
<dbReference type="SMART" id="SM00032">
    <property type="entry name" value="CCP"/>
    <property type="match status" value="3"/>
</dbReference>
<dbReference type="SMART" id="SM00020">
    <property type="entry name" value="Tryp_SPc"/>
    <property type="match status" value="1"/>
</dbReference>
<dbReference type="SMART" id="SM00327">
    <property type="entry name" value="VWA"/>
    <property type="match status" value="1"/>
</dbReference>
<dbReference type="SUPFAM" id="SSF57535">
    <property type="entry name" value="Complement control module/SCR domain"/>
    <property type="match status" value="3"/>
</dbReference>
<dbReference type="SUPFAM" id="SSF50494">
    <property type="entry name" value="Trypsin-like serine proteases"/>
    <property type="match status" value="1"/>
</dbReference>
<dbReference type="SUPFAM" id="SSF53300">
    <property type="entry name" value="vWA-like"/>
    <property type="match status" value="1"/>
</dbReference>
<dbReference type="PROSITE" id="PS50923">
    <property type="entry name" value="SUSHI"/>
    <property type="match status" value="3"/>
</dbReference>
<dbReference type="PROSITE" id="PS50240">
    <property type="entry name" value="TRYPSIN_DOM"/>
    <property type="match status" value="1"/>
</dbReference>
<dbReference type="PROSITE" id="PS00134">
    <property type="entry name" value="TRYPSIN_HIS"/>
    <property type="match status" value="1"/>
</dbReference>
<dbReference type="PROSITE" id="PS00135">
    <property type="entry name" value="TRYPSIN_SER"/>
    <property type="match status" value="1"/>
</dbReference>
<dbReference type="PROSITE" id="PS50234">
    <property type="entry name" value="VWFA"/>
    <property type="match status" value="1"/>
</dbReference>
<sequence>MDPLMAVLCLLPLYPGLATAALSCPKNVNISGGSFTLSNGWNPGSILTYSCPLGHYPYPVVTRLCKSNGQWQIPRSTRSTKAICKPVRCPAPVSFENGVYIPRLGSHPVGGNLSFECEDGFTLRGSAVRQCRPNGMWDGETAVCDNGASHCPNPGISVGAVRTGSRFGLGDKVRYRCSSNLVLTGSAERECQDDGVWSGTEAICRQPYSYDFPEDVAPALGTSFSHLLATTNPIQQKKKQNLGRKIQIQRSGHLNLYLLLDASQSVSKDDFEIFKDSASRMVDRIFSFEIKVSVAIITFASKPKIIMSVLEDRSRDVTEVENSLRNINYKDHENGTGTNIYEALHAVYIMMNNQMNRPHMNPGAWQEIRHAIILLTDGKSNMGGSPKVAVDNIKEVLNINQKRKDYLDIYAIGVGSLHVDWKELNNLGSKKDGERHAFILKDVQALSQVFEHMLDVSQLTDPICGVGNMSANASAQERTPWHVTIKPKSQETCRGALISDQWVLTAAHCFRNAEDRTLWRVSVGDPNFQGSKEFQIEEAVISPGFNVFSKKSQGIPEFYGDDIALLKLTQKVKMSTHARPICLPCTVGANLALRKLPGSTCRDHEKELLNQVSIPAHFVALNGDKLNINLKTGSEWTNCVKVVLKDKTTFPNLTDVREVVTDQFLCSGTQGDDSPCKGESGGAVFLERRLRFFQVGLVSWGLYNPCGGSSKNSRKPAPHGKVPRDFHINLFRLQPWLRQHLEGILNFVPL</sequence>
<evidence type="ECO:0000250" key="1">
    <source>
        <dbReference type="UniProtKB" id="P06681"/>
    </source>
</evidence>
<evidence type="ECO:0000255" key="2"/>
<evidence type="ECO:0000255" key="3">
    <source>
        <dbReference type="PROSITE-ProRule" id="PRU00219"/>
    </source>
</evidence>
<evidence type="ECO:0000255" key="4">
    <source>
        <dbReference type="PROSITE-ProRule" id="PRU00274"/>
    </source>
</evidence>
<evidence type="ECO:0000255" key="5">
    <source>
        <dbReference type="PROSITE-ProRule" id="PRU00302"/>
    </source>
</evidence>
<evidence type="ECO:0000305" key="6"/>
<comment type="function">
    <text evidence="1">Precursor of the catalytic component of the C3 and C5 convertase complexes, which are part of the complement pathway, a cascade of proteins that leads to phagocytosis and breakdown of pathogens and signaling that strengthens the adaptive immune system. Component C2 is part of the classical, lectin and GZMK complement systems.</text>
</comment>
<comment type="function">
    <molecule>Serine protease complement C2b</molecule>
    <text evidence="1">Catalytic component of the complement C3 and C5 convertase complexes. Following complement activation, recruited to the surface of pathogens by complement C4b opsonin to form the C3 convertase, or C3b and C4b opsonins to form the C5 convertase. As part of the C3 convertase, cleaves and activate C3 into C3a anaphylatoxin and C3b opsonin, the next components of the complement pathways. As part of the C5 convertase, cleaves and activate C5 into C5a anaphylatoxin and C5b component of the membrane attack complex.</text>
</comment>
<comment type="catalytic activity">
    <molecule>Serine protease complement C2b</molecule>
    <reaction evidence="1">
        <text>Selective cleavage of Arg-|-Ser bond in complement component C3 alpha-chain to form C3a and C3b, and Arg-|-Xaa bond in complement component C5 alpha-chain to form C5a and C5b.</text>
        <dbReference type="EC" id="3.4.21.43"/>
    </reaction>
</comment>
<comment type="cofactor">
    <cofactor evidence="1">
        <name>Mg(2+)</name>
        <dbReference type="ChEBI" id="CHEBI:18420"/>
    </cofactor>
    <cofactor evidence="1">
        <name>Mn(2+)</name>
        <dbReference type="ChEBI" id="CHEBI:29035"/>
    </cofactor>
</comment>
<comment type="subunit">
    <molecule>Serine protease complement C2b</molecule>
    <text evidence="1">Serine protease component of the C3 convertase, also named C4bC2b, composed of the serine protease complement C2b and complement C4b. Serine protease component of the C5 convertase, also named C4bC2bC3b, composed of the serine protease complement C2b, complement C3b, as well as complement C4b.</text>
</comment>
<comment type="subcellular location">
    <subcellularLocation>
        <location evidence="1">Secreted</location>
    </subcellularLocation>
    <subcellularLocation>
        <location evidence="1">Cell surface</location>
    </subcellularLocation>
    <text evidence="1">Recruited to the surface of pathogens by complement C3b and complement C4b opsonins.</text>
</comment>
<comment type="domain">
    <text evidence="1">The MIDAS-like motif in the VWFA domain binds divalent metal cations.</text>
</comment>
<comment type="PTM">
    <text evidence="1">Cleaved and activated by different proteases depending on the complement pathway to generate complement C2a and serine protease complement C2b chains. Cleaved and activated by C1S following activation by the classical complement system. Cleaved and activated by MASP2 following activation by the lectin complement system. Cleaved and activated by GZMK following activation by the GZMK complement system.</text>
</comment>
<comment type="similarity">
    <text evidence="4">Belongs to the peptidase S1 family.</text>
</comment>
<comment type="caution">
    <text evidence="6">Historically, the serine protease complement C2b, which constitutes the larger catalytic fragment, was named C2a. It was later renamed C2b, a nomenclature widely accepted now.</text>
</comment>
<organism>
    <name type="scientific">Bos taurus</name>
    <name type="common">Bovine</name>
    <dbReference type="NCBI Taxonomy" id="9913"/>
    <lineage>
        <taxon>Eukaryota</taxon>
        <taxon>Metazoa</taxon>
        <taxon>Chordata</taxon>
        <taxon>Craniata</taxon>
        <taxon>Vertebrata</taxon>
        <taxon>Euteleostomi</taxon>
        <taxon>Mammalia</taxon>
        <taxon>Eutheria</taxon>
        <taxon>Laurasiatheria</taxon>
        <taxon>Artiodactyla</taxon>
        <taxon>Ruminantia</taxon>
        <taxon>Pecora</taxon>
        <taxon>Bovidae</taxon>
        <taxon>Bovinae</taxon>
        <taxon>Bos</taxon>
    </lineage>
</organism>
<gene>
    <name type="primary">C2</name>
</gene>